<dbReference type="EC" id="3.1.21.4"/>
<dbReference type="EMBL" id="X79027">
    <property type="protein sequence ID" value="CAA55648.1"/>
    <property type="molecule type" value="Genomic_DNA"/>
</dbReference>
<dbReference type="PIR" id="T45133">
    <property type="entry name" value="T45133"/>
</dbReference>
<dbReference type="REBASE" id="1200">
    <property type="entry name" value="MamI"/>
</dbReference>
<dbReference type="PRO" id="PR:P50189"/>
<dbReference type="GO" id="GO:0003677">
    <property type="term" value="F:DNA binding"/>
    <property type="evidence" value="ECO:0007669"/>
    <property type="project" value="InterPro"/>
</dbReference>
<dbReference type="GO" id="GO:0009036">
    <property type="term" value="F:type II site-specific deoxyribonuclease activity"/>
    <property type="evidence" value="ECO:0007669"/>
    <property type="project" value="UniProtKB-EC"/>
</dbReference>
<dbReference type="GO" id="GO:0009307">
    <property type="term" value="P:DNA restriction-modification system"/>
    <property type="evidence" value="ECO:0007669"/>
    <property type="project" value="UniProtKB-KW"/>
</dbReference>
<dbReference type="InterPro" id="IPR019067">
    <property type="entry name" value="Restrct_endonuc_II_MamI"/>
</dbReference>
<dbReference type="Pfam" id="PF09567">
    <property type="entry name" value="RE_MamI"/>
    <property type="match status" value="1"/>
</dbReference>
<gene>
    <name evidence="2" type="primary">mamIR</name>
</gene>
<keyword id="KW-0903">Direct protein sequencing</keyword>
<keyword id="KW-0255">Endonuclease</keyword>
<keyword id="KW-0378">Hydrolase</keyword>
<keyword id="KW-0540">Nuclease</keyword>
<keyword id="KW-0680">Restriction system</keyword>
<proteinExistence type="evidence at protein level"/>
<comment type="function">
    <text evidence="1">A P subtype restriction enzyme that recognizes the double-stranded sequence 5'-GATNNNNATC-3' and cleaves after N-5.</text>
</comment>
<comment type="catalytic activity">
    <reaction>
        <text>Endonucleolytic cleavage of DNA to give specific double-stranded fragments with terminal 5'-phosphates.</text>
        <dbReference type="EC" id="3.1.21.4"/>
    </reaction>
</comment>
<reference key="1">
    <citation type="journal article" date="1996" name="Gene">
        <title>Cloning and characterization of the MamI restriction-modification system from Microbacterium ammoniaphilum in Escherichia coli.</title>
        <authorList>
            <person name="Striebel H.-M."/>
            <person name="Seeber S."/>
            <person name="Jarsch M."/>
            <person name="Kessler C."/>
        </authorList>
    </citation>
    <scope>NUCLEOTIDE SEQUENCE [GENOMIC DNA]</scope>
    <scope>PROTEIN SEQUENCE OF 1-24</scope>
    <source>
        <strain>ATCC 15354 / DSM 20156 / BCRC 11670 / NCIMB 10335 / NRRL B-4247</strain>
    </source>
</reference>
<reference key="2">
    <citation type="journal article" date="2003" name="Nucleic Acids Res.">
        <title>A nomenclature for restriction enzymes, DNA methyltransferases, homing endonucleases and their genes.</title>
        <authorList>
            <person name="Roberts R.J."/>
            <person name="Belfort M."/>
            <person name="Bestor T."/>
            <person name="Bhagwat A.S."/>
            <person name="Bickle T.A."/>
            <person name="Bitinaite J."/>
            <person name="Blumenthal R.M."/>
            <person name="Degtyarev S.K."/>
            <person name="Dryden D.T."/>
            <person name="Dybvig K."/>
            <person name="Firman K."/>
            <person name="Gromova E.S."/>
            <person name="Gumport R.I."/>
            <person name="Halford S.E."/>
            <person name="Hattman S."/>
            <person name="Heitman J."/>
            <person name="Hornby D.P."/>
            <person name="Janulaitis A."/>
            <person name="Jeltsch A."/>
            <person name="Josephsen J."/>
            <person name="Kiss A."/>
            <person name="Klaenhammer T.R."/>
            <person name="Kobayashi I."/>
            <person name="Kong H."/>
            <person name="Krueger D.H."/>
            <person name="Lacks S."/>
            <person name="Marinus M.G."/>
            <person name="Miyahara M."/>
            <person name="Morgan R.D."/>
            <person name="Murray N.E."/>
            <person name="Nagaraja V."/>
            <person name="Piekarowicz A."/>
            <person name="Pingoud A."/>
            <person name="Raleigh E."/>
            <person name="Rao D.N."/>
            <person name="Reich N."/>
            <person name="Repin V.E."/>
            <person name="Selker E.U."/>
            <person name="Shaw P.C."/>
            <person name="Stein D.C."/>
            <person name="Stoddard B.L."/>
            <person name="Szybalski W."/>
            <person name="Trautner T.A."/>
            <person name="Van Etten J.L."/>
            <person name="Vitor J.M."/>
            <person name="Wilson G.G."/>
            <person name="Xu S.Y."/>
        </authorList>
    </citation>
    <scope>NOMENCLATURE</scope>
    <scope>SUBTYPE</scope>
</reference>
<accession>P50189</accession>
<evidence type="ECO:0000303" key="1">
    <source>
    </source>
</evidence>
<evidence type="ECO:0000303" key="2">
    <source>
    </source>
</evidence>
<sequence>MQNAVSQAISQGIHVRREILGSLTYEQRVFLLEDLFVDLFGHQHVMLQRWAALTGQSAQVDTGYIAQFVASIVLGEPGQGFRGKGDDLADGSEVKSAANISGVDRPRWNHNLGSLDDDEHRRSRGLPTAGEEYLGVPYMFYLLVDRPHGVSDPAPIRIRAWCIDAQEDGDWRDLFETFLTSRRGRTYNFQLHPPVGYDDDVVVNTLGNLDFSNVLVFDARLSLADRDRPEIDWHVPLPTQVIPVTGRTRALRYGGRGARPTRLTNTADIVLGTNDLGALFPGVLAPRDSYDLATVSEIETEAEVEEYS</sequence>
<feature type="chain" id="PRO_0000077329" description="Type II restriction enzyme MamI">
    <location>
        <begin position="1"/>
        <end position="308"/>
    </location>
</feature>
<protein>
    <recommendedName>
        <fullName evidence="1">Type II restriction enzyme MamI</fullName>
        <shortName evidence="2">R.MamI</shortName>
        <ecNumber>3.1.21.4</ecNumber>
    </recommendedName>
    <alternativeName>
        <fullName>Endonuclease MamI</fullName>
    </alternativeName>
    <alternativeName>
        <fullName>Type-2 restriction enzyme MamI</fullName>
    </alternativeName>
</protein>
<organism>
    <name type="scientific">Microbacterium ammoniaphilum</name>
    <dbReference type="NCBI Taxonomy" id="42460"/>
    <lineage>
        <taxon>Bacteria</taxon>
        <taxon>Bacillati</taxon>
        <taxon>Actinomycetota</taxon>
        <taxon>Actinomycetes</taxon>
        <taxon>Micrococcales</taxon>
        <taxon>Microbacteriaceae</taxon>
        <taxon>Microbacterium</taxon>
    </lineage>
</organism>
<name>T2M1_MICAM</name>